<feature type="chain" id="PRO_0000160712" description="Alcohol dehydrogenase 1">
    <location>
        <begin position="1"/>
        <end position="380"/>
    </location>
</feature>
<feature type="binding site" evidence="2">
    <location>
        <position position="48"/>
    </location>
    <ligand>
        <name>Zn(2+)</name>
        <dbReference type="ChEBI" id="CHEBI:29105"/>
        <label>1</label>
        <note>catalytic</note>
    </ligand>
</feature>
<feature type="binding site" evidence="2">
    <location>
        <position position="50"/>
    </location>
    <ligand>
        <name>an alcohol</name>
        <dbReference type="ChEBI" id="CHEBI:30879"/>
    </ligand>
</feature>
<feature type="binding site" evidence="2">
    <location>
        <position position="50"/>
    </location>
    <ligand>
        <name>NAD(+)</name>
        <dbReference type="ChEBI" id="CHEBI:57540"/>
    </ligand>
</feature>
<feature type="binding site" evidence="2">
    <location>
        <position position="50"/>
    </location>
    <ligand>
        <name>Zn(2+)</name>
        <dbReference type="ChEBI" id="CHEBI:29105"/>
        <label>1</label>
        <note>catalytic</note>
    </ligand>
</feature>
<feature type="binding site" evidence="1">
    <location>
        <position position="70"/>
    </location>
    <ligand>
        <name>an alcohol</name>
        <dbReference type="ChEBI" id="CHEBI:30879"/>
    </ligand>
</feature>
<feature type="binding site" evidence="2">
    <location>
        <position position="70"/>
    </location>
    <ligand>
        <name>Zn(2+)</name>
        <dbReference type="ChEBI" id="CHEBI:29105"/>
        <label>1</label>
        <note>catalytic</note>
    </ligand>
</feature>
<feature type="binding site" evidence="2">
    <location>
        <position position="100"/>
    </location>
    <ligand>
        <name>Zn(2+)</name>
        <dbReference type="ChEBI" id="CHEBI:29105"/>
        <label>2</label>
    </ligand>
</feature>
<feature type="binding site" evidence="2">
    <location>
        <position position="103"/>
    </location>
    <ligand>
        <name>Zn(2+)</name>
        <dbReference type="ChEBI" id="CHEBI:29105"/>
        <label>2</label>
    </ligand>
</feature>
<feature type="binding site" evidence="2">
    <location>
        <position position="106"/>
    </location>
    <ligand>
        <name>Zn(2+)</name>
        <dbReference type="ChEBI" id="CHEBI:29105"/>
        <label>2</label>
    </ligand>
</feature>
<feature type="binding site" evidence="2">
    <location>
        <position position="114"/>
    </location>
    <ligand>
        <name>Zn(2+)</name>
        <dbReference type="ChEBI" id="CHEBI:29105"/>
        <label>2</label>
    </ligand>
</feature>
<feature type="binding site" evidence="2">
    <location>
        <position position="178"/>
    </location>
    <ligand>
        <name>Zn(2+)</name>
        <dbReference type="ChEBI" id="CHEBI:29105"/>
        <label>1</label>
        <note>catalytic</note>
    </ligand>
</feature>
<feature type="binding site" evidence="2">
    <location>
        <begin position="203"/>
        <end position="208"/>
    </location>
    <ligand>
        <name>NAD(+)</name>
        <dbReference type="ChEBI" id="CHEBI:57540"/>
    </ligand>
</feature>
<feature type="binding site" evidence="2">
    <location>
        <position position="227"/>
    </location>
    <ligand>
        <name>NAD(+)</name>
        <dbReference type="ChEBI" id="CHEBI:57540"/>
    </ligand>
</feature>
<feature type="binding site" evidence="2">
    <location>
        <position position="232"/>
    </location>
    <ligand>
        <name>NAD(+)</name>
        <dbReference type="ChEBI" id="CHEBI:57540"/>
    </ligand>
</feature>
<feature type="binding site" evidence="2">
    <location>
        <position position="273"/>
    </location>
    <ligand>
        <name>NAD(+)</name>
        <dbReference type="ChEBI" id="CHEBI:57540"/>
    </ligand>
</feature>
<feature type="binding site" evidence="1">
    <location>
        <begin position="296"/>
        <end position="298"/>
    </location>
    <ligand>
        <name>NAD(+)</name>
        <dbReference type="ChEBI" id="CHEBI:57540"/>
    </ligand>
</feature>
<feature type="binding site" evidence="2">
    <location>
        <position position="296"/>
    </location>
    <ligand>
        <name>NAD(+)</name>
        <dbReference type="ChEBI" id="CHEBI:57540"/>
    </ligand>
</feature>
<feature type="binding site" evidence="2">
    <location>
        <position position="323"/>
    </location>
    <ligand>
        <name>NAD(+)</name>
        <dbReference type="ChEBI" id="CHEBI:57540"/>
    </ligand>
</feature>
<feature type="binding site" evidence="2">
    <location>
        <position position="373"/>
    </location>
    <ligand>
        <name>NAD(+)</name>
        <dbReference type="ChEBI" id="CHEBI:57540"/>
    </ligand>
</feature>
<feature type="sequence conflict" description="In Ref. 1; CAA37333." evidence="5" ref="1">
    <original>G</original>
    <variation>A</variation>
    <location>
        <position position="87"/>
    </location>
</feature>
<sequence length="380" mass="41094">MSTTVGQVIRCKAAVAWEAGKPLVMEEVDVAPPQKMEVRLKILYTSLCHTDVYFWEAKGQNPVFPRILGHEAAGIVESVGEGVTELGPGDHVLPVFTGECKDCAHCKSEESNMCSLLRINTDRGVMINDGQSRFSINGKPIYHFVGTSTFSEYTVVHVGCVAKINPLAPLDKVCVLSCGISTGLGATLNVAKPTKGSSVAIFGLGAVGLAAAEGARIAGASRIIGVDLNASRFEQAKKFGVTEFVNPKDYSKPVQEVIAEMTDGGVDRSVECTGHIDAMISAFECVHDGWGVAVLVGVPHKEAVFKTHPMNLLNERTLKGTFFGNYKPRSDIPSVVEKYMNKELELEKFITHTLPFAEINKAFDLMLKGEGLRCIITMED</sequence>
<accession>P14673</accession>
<dbReference type="EC" id="1.1.1.1" evidence="3"/>
<dbReference type="EMBL" id="M25154">
    <property type="protein sequence ID" value="AAA33806.1"/>
    <property type="molecule type" value="mRNA"/>
</dbReference>
<dbReference type="EMBL" id="X53242">
    <property type="protein sequence ID" value="CAA37333.1"/>
    <property type="molecule type" value="mRNA"/>
</dbReference>
<dbReference type="PIR" id="S11853">
    <property type="entry name" value="DEPOA1"/>
</dbReference>
<dbReference type="SMR" id="P14673"/>
<dbReference type="STRING" id="4113.P14673"/>
<dbReference type="InParanoid" id="P14673"/>
<dbReference type="BioCyc" id="MetaCyc:MONOMER-15099"/>
<dbReference type="Proteomes" id="UP000011115">
    <property type="component" value="Unassembled WGS sequence"/>
</dbReference>
<dbReference type="ExpressionAtlas" id="P14673">
    <property type="expression patterns" value="baseline"/>
</dbReference>
<dbReference type="GO" id="GO:0005829">
    <property type="term" value="C:cytosol"/>
    <property type="evidence" value="ECO:0000318"/>
    <property type="project" value="GO_Central"/>
</dbReference>
<dbReference type="GO" id="GO:0004022">
    <property type="term" value="F:alcohol dehydrogenase (NAD+) activity"/>
    <property type="evidence" value="ECO:0000318"/>
    <property type="project" value="GO_Central"/>
</dbReference>
<dbReference type="GO" id="GO:0051903">
    <property type="term" value="F:S-(hydroxymethyl)glutathione dehydrogenase [NAD(P)+] activity"/>
    <property type="evidence" value="ECO:0000318"/>
    <property type="project" value="GO_Central"/>
</dbReference>
<dbReference type="GO" id="GO:0008270">
    <property type="term" value="F:zinc ion binding"/>
    <property type="evidence" value="ECO:0000318"/>
    <property type="project" value="GO_Central"/>
</dbReference>
<dbReference type="GO" id="GO:0009820">
    <property type="term" value="P:alkaloid metabolic process"/>
    <property type="evidence" value="ECO:0007669"/>
    <property type="project" value="UniProtKB-ARBA"/>
</dbReference>
<dbReference type="GO" id="GO:0046294">
    <property type="term" value="P:formaldehyde catabolic process"/>
    <property type="evidence" value="ECO:0000318"/>
    <property type="project" value="GO_Central"/>
</dbReference>
<dbReference type="CDD" id="cd08301">
    <property type="entry name" value="alcohol_DH_plants"/>
    <property type="match status" value="1"/>
</dbReference>
<dbReference type="FunFam" id="3.90.180.10:FF:000067">
    <property type="entry name" value="alcohol dehydrogenase 1-like isoform X1"/>
    <property type="match status" value="1"/>
</dbReference>
<dbReference type="FunFam" id="3.40.50.720:FF:001292">
    <property type="entry name" value="Alcohol dehydrogenase class-P"/>
    <property type="match status" value="1"/>
</dbReference>
<dbReference type="Gene3D" id="3.90.180.10">
    <property type="entry name" value="Medium-chain alcohol dehydrogenases, catalytic domain"/>
    <property type="match status" value="1"/>
</dbReference>
<dbReference type="Gene3D" id="3.40.50.720">
    <property type="entry name" value="NAD(P)-binding Rossmann-like Domain"/>
    <property type="match status" value="1"/>
</dbReference>
<dbReference type="InterPro" id="IPR013149">
    <property type="entry name" value="ADH-like_C"/>
</dbReference>
<dbReference type="InterPro" id="IPR013154">
    <property type="entry name" value="ADH-like_N"/>
</dbReference>
<dbReference type="InterPro" id="IPR002328">
    <property type="entry name" value="ADH_Zn_CS"/>
</dbReference>
<dbReference type="InterPro" id="IPR011032">
    <property type="entry name" value="GroES-like_sf"/>
</dbReference>
<dbReference type="InterPro" id="IPR036291">
    <property type="entry name" value="NAD(P)-bd_dom_sf"/>
</dbReference>
<dbReference type="PANTHER" id="PTHR43880">
    <property type="entry name" value="ALCOHOL DEHYDROGENASE"/>
    <property type="match status" value="1"/>
</dbReference>
<dbReference type="PANTHER" id="PTHR43880:SF40">
    <property type="entry name" value="ALCOHOL DEHYDROGENASE 2"/>
    <property type="match status" value="1"/>
</dbReference>
<dbReference type="Pfam" id="PF08240">
    <property type="entry name" value="ADH_N"/>
    <property type="match status" value="1"/>
</dbReference>
<dbReference type="Pfam" id="PF00107">
    <property type="entry name" value="ADH_zinc_N"/>
    <property type="match status" value="1"/>
</dbReference>
<dbReference type="SUPFAM" id="SSF50129">
    <property type="entry name" value="GroES-like"/>
    <property type="match status" value="2"/>
</dbReference>
<dbReference type="SUPFAM" id="SSF51735">
    <property type="entry name" value="NAD(P)-binding Rossmann-fold domains"/>
    <property type="match status" value="1"/>
</dbReference>
<dbReference type="PROSITE" id="PS00059">
    <property type="entry name" value="ADH_ZINC"/>
    <property type="match status" value="1"/>
</dbReference>
<reference key="1">
    <citation type="journal article" date="1990" name="Plant Mol. Biol.">
        <title>Alcohol dehydrogenase gene expression in potato following elicitor and stress treatment.</title>
        <authorList>
            <person name="Matton D.P."/>
            <person name="Constabel P."/>
            <person name="Brisson N."/>
        </authorList>
    </citation>
    <scope>NUCLEOTIDE SEQUENCE [MRNA]</scope>
    <scope>CATALYTIC ACTIVITY</scope>
    <scope>INDUCTION BY FUNGAL ELICITOR</scope>
</reference>
<proteinExistence type="evidence at protein level"/>
<evidence type="ECO:0000250" key="1">
    <source>
        <dbReference type="UniProtKB" id="P00327"/>
    </source>
</evidence>
<evidence type="ECO:0000250" key="2">
    <source>
        <dbReference type="UniProtKB" id="P06525"/>
    </source>
</evidence>
<evidence type="ECO:0000269" key="3">
    <source>
    </source>
</evidence>
<evidence type="ECO:0000303" key="4">
    <source>
    </source>
</evidence>
<evidence type="ECO:0000305" key="5"/>
<gene>
    <name type="primary">ADH1</name>
</gene>
<protein>
    <recommendedName>
        <fullName evidence="4">Alcohol dehydrogenase 1</fullName>
        <ecNumber evidence="3">1.1.1.1</ecNumber>
    </recommendedName>
</protein>
<organism>
    <name type="scientific">Solanum tuberosum</name>
    <name type="common">Potato</name>
    <dbReference type="NCBI Taxonomy" id="4113"/>
    <lineage>
        <taxon>Eukaryota</taxon>
        <taxon>Viridiplantae</taxon>
        <taxon>Streptophyta</taxon>
        <taxon>Embryophyta</taxon>
        <taxon>Tracheophyta</taxon>
        <taxon>Spermatophyta</taxon>
        <taxon>Magnoliopsida</taxon>
        <taxon>eudicotyledons</taxon>
        <taxon>Gunneridae</taxon>
        <taxon>Pentapetalae</taxon>
        <taxon>asterids</taxon>
        <taxon>lamiids</taxon>
        <taxon>Solanales</taxon>
        <taxon>Solanaceae</taxon>
        <taxon>Solanoideae</taxon>
        <taxon>Solaneae</taxon>
        <taxon>Solanum</taxon>
    </lineage>
</organism>
<comment type="catalytic activity">
    <reaction evidence="3">
        <text>a primary alcohol + NAD(+) = an aldehyde + NADH + H(+)</text>
        <dbReference type="Rhea" id="RHEA:10736"/>
        <dbReference type="ChEBI" id="CHEBI:15378"/>
        <dbReference type="ChEBI" id="CHEBI:15734"/>
        <dbReference type="ChEBI" id="CHEBI:17478"/>
        <dbReference type="ChEBI" id="CHEBI:57540"/>
        <dbReference type="ChEBI" id="CHEBI:57945"/>
        <dbReference type="EC" id="1.1.1.1"/>
    </reaction>
</comment>
<comment type="catalytic activity">
    <reaction evidence="3">
        <text>a secondary alcohol + NAD(+) = a ketone + NADH + H(+)</text>
        <dbReference type="Rhea" id="RHEA:10740"/>
        <dbReference type="ChEBI" id="CHEBI:15378"/>
        <dbReference type="ChEBI" id="CHEBI:17087"/>
        <dbReference type="ChEBI" id="CHEBI:35681"/>
        <dbReference type="ChEBI" id="CHEBI:57540"/>
        <dbReference type="ChEBI" id="CHEBI:57945"/>
        <dbReference type="EC" id="1.1.1.1"/>
    </reaction>
</comment>
<comment type="cofactor">
    <cofactor evidence="2">
        <name>Zn(2+)</name>
        <dbReference type="ChEBI" id="CHEBI:29105"/>
    </cofactor>
    <text evidence="2">Binds 2 Zn(2+) ions per subunit.</text>
</comment>
<comment type="subunit">
    <text evidence="2">Homodimer (By similarity). Homotetramer.</text>
</comment>
<comment type="subcellular location">
    <subcellularLocation>
        <location evidence="2">Cytoplasm</location>
    </subcellularLocation>
</comment>
<comment type="induction">
    <text evidence="3">By fungal elicitor.</text>
</comment>
<comment type="similarity">
    <text evidence="5">Belongs to the zinc-containing alcohol dehydrogenase family.</text>
</comment>
<keyword id="KW-0963">Cytoplasm</keyword>
<keyword id="KW-0479">Metal-binding</keyword>
<keyword id="KW-0520">NAD</keyword>
<keyword id="KW-0560">Oxidoreductase</keyword>
<keyword id="KW-1185">Reference proteome</keyword>
<keyword id="KW-0862">Zinc</keyword>
<name>ADH1_SOLTU</name>